<dbReference type="EC" id="1.11.1.7"/>
<dbReference type="GO" id="GO:0005576">
    <property type="term" value="C:extracellular region"/>
    <property type="evidence" value="ECO:0007669"/>
    <property type="project" value="UniProtKB-SubCell"/>
</dbReference>
<dbReference type="GO" id="GO:0140825">
    <property type="term" value="F:lactoperoxidase activity"/>
    <property type="evidence" value="ECO:0007669"/>
    <property type="project" value="UniProtKB-EC"/>
</dbReference>
<dbReference type="GO" id="GO:0046872">
    <property type="term" value="F:metal ion binding"/>
    <property type="evidence" value="ECO:0007669"/>
    <property type="project" value="UniProtKB-KW"/>
</dbReference>
<dbReference type="GO" id="GO:0042744">
    <property type="term" value="P:hydrogen peroxide catabolic process"/>
    <property type="evidence" value="ECO:0007669"/>
    <property type="project" value="UniProtKB-KW"/>
</dbReference>
<evidence type="ECO:0000250" key="1">
    <source>
        <dbReference type="UniProtKB" id="P22195"/>
    </source>
</evidence>
<evidence type="ECO:0000250" key="2">
    <source>
        <dbReference type="UniProtKB" id="P84516"/>
    </source>
</evidence>
<evidence type="ECO:0000255" key="3">
    <source>
        <dbReference type="PROSITE-ProRule" id="PRU00297"/>
    </source>
</evidence>
<evidence type="ECO:0000269" key="4">
    <source>
    </source>
</evidence>
<evidence type="ECO:0000303" key="5">
    <source>
    </source>
</evidence>
<evidence type="ECO:0000305" key="6"/>
<accession>P85349</accession>
<feature type="chain" id="PRO_0000315886" description="Peroxidase 4">
    <location>
        <begin position="1" status="less than"/>
        <end position="8" status="greater than"/>
    </location>
</feature>
<feature type="non-terminal residue" evidence="5">
    <location>
        <position position="1"/>
    </location>
</feature>
<feature type="non-terminal residue" evidence="5">
    <location>
        <position position="8"/>
    </location>
</feature>
<organism>
    <name type="scientific">Cycas revoluta</name>
    <name type="common">Sago palm</name>
    <dbReference type="NCBI Taxonomy" id="3396"/>
    <lineage>
        <taxon>Eukaryota</taxon>
        <taxon>Viridiplantae</taxon>
        <taxon>Streptophyta</taxon>
        <taxon>Embryophyta</taxon>
        <taxon>Tracheophyta</taxon>
        <taxon>Spermatophyta</taxon>
        <taxon>Cycadidae</taxon>
        <taxon>Cycadales</taxon>
        <taxon>Cycadaceae</taxon>
        <taxon>Cycas</taxon>
    </lineage>
</organism>
<name>PER4_CYCRE</name>
<keyword id="KW-0106">Calcium</keyword>
<keyword id="KW-0134">Cell wall</keyword>
<keyword id="KW-0903">Direct protein sequencing</keyword>
<keyword id="KW-0349">Heme</keyword>
<keyword id="KW-0376">Hydrogen peroxide</keyword>
<keyword id="KW-0408">Iron</keyword>
<keyword id="KW-0479">Metal-binding</keyword>
<keyword id="KW-0560">Oxidoreductase</keyword>
<keyword id="KW-0575">Peroxidase</keyword>
<keyword id="KW-0964">Secreted</keyword>
<reference evidence="6" key="1">
    <citation type="journal article" date="2009" name="J. Plant Physiol.">
        <title>Analysis of the soluble cell wall proteome of gymnosperms.</title>
        <authorList>
            <person name="Uzal E.N."/>
            <person name="Gomez-Ros L.V."/>
            <person name="Hernandez J.A."/>
            <person name="Pedreno M.A."/>
            <person name="Cuello J."/>
            <person name="Ros Barcelo A."/>
        </authorList>
    </citation>
    <scope>PROTEIN SEQUENCE</scope>
    <scope>SUBCELLULAR LOCATION</scope>
    <source>
        <tissue evidence="4">Callus</tissue>
    </source>
</reference>
<protein>
    <recommendedName>
        <fullName>Peroxidase 4</fullName>
        <ecNumber>1.11.1.7</ecNumber>
    </recommendedName>
</protein>
<comment type="function">
    <text evidence="6">Removal of H(2)O(2), oxidation of toxic reductants, biosynthesis and degradation of lignin, suberization, auxin catabolism, response to environmental stresses such as wounding, pathogen attack and oxidative stress. These functions might be dependent on each isozyme/isoform in each plant tissue.</text>
</comment>
<comment type="catalytic activity">
    <reaction>
        <text>2 a phenolic donor + H2O2 = 2 a phenolic radical donor + 2 H2O</text>
        <dbReference type="Rhea" id="RHEA:56136"/>
        <dbReference type="ChEBI" id="CHEBI:15377"/>
        <dbReference type="ChEBI" id="CHEBI:16240"/>
        <dbReference type="ChEBI" id="CHEBI:139520"/>
        <dbReference type="ChEBI" id="CHEBI:139521"/>
        <dbReference type="EC" id="1.11.1.7"/>
    </reaction>
</comment>
<comment type="cofactor">
    <cofactor evidence="1 3">
        <name>Ca(2+)</name>
        <dbReference type="ChEBI" id="CHEBI:29108"/>
    </cofactor>
    <text evidence="1 3">Binds 2 calcium ions per subunit.</text>
</comment>
<comment type="cofactor">
    <cofactor evidence="1 3">
        <name>heme b</name>
        <dbReference type="ChEBI" id="CHEBI:60344"/>
    </cofactor>
    <text evidence="1 3">Binds 1 heme b (iron(II)-protoporphyrin IX) group per subunit.</text>
</comment>
<comment type="subcellular location">
    <subcellularLocation>
        <location evidence="2 3">Secreted</location>
    </subcellularLocation>
    <subcellularLocation>
        <location evidence="4">Secreted</location>
        <location evidence="4">Cell wall</location>
    </subcellularLocation>
</comment>
<comment type="similarity">
    <text evidence="3">Belongs to the peroxidase family. Classical plant (class III) peroxidase subfamily.</text>
</comment>
<proteinExistence type="evidence at protein level"/>
<sequence>YYVDLQNR</sequence>